<protein>
    <recommendedName>
        <fullName>Uncharacterized protein MJ1589</fullName>
    </recommendedName>
</protein>
<feature type="chain" id="PRO_0000107430" description="Uncharacterized protein MJ1589">
    <location>
        <begin position="1"/>
        <end position="241"/>
    </location>
</feature>
<feature type="transmembrane region" description="Helical" evidence="1">
    <location>
        <begin position="1"/>
        <end position="21"/>
    </location>
</feature>
<feature type="transmembrane region" description="Helical" evidence="1">
    <location>
        <begin position="43"/>
        <end position="63"/>
    </location>
</feature>
<feature type="transmembrane region" description="Helical" evidence="1">
    <location>
        <begin position="75"/>
        <end position="95"/>
    </location>
</feature>
<feature type="transmembrane region" description="Helical" evidence="1">
    <location>
        <begin position="108"/>
        <end position="128"/>
    </location>
</feature>
<feature type="transmembrane region" description="Helical" evidence="1">
    <location>
        <begin position="160"/>
        <end position="180"/>
    </location>
</feature>
<feature type="transmembrane region" description="Helical" evidence="1">
    <location>
        <begin position="200"/>
        <end position="220"/>
    </location>
</feature>
<keyword id="KW-1003">Cell membrane</keyword>
<keyword id="KW-0472">Membrane</keyword>
<keyword id="KW-1185">Reference proteome</keyword>
<keyword id="KW-0812">Transmembrane</keyword>
<keyword id="KW-1133">Transmembrane helix</keyword>
<name>Y1589_METJA</name>
<dbReference type="EMBL" id="L77117">
    <property type="protein sequence ID" value="AAB99617.1"/>
    <property type="molecule type" value="Genomic_DNA"/>
</dbReference>
<dbReference type="PIR" id="D64498">
    <property type="entry name" value="D64498"/>
</dbReference>
<dbReference type="RefSeq" id="WP_010871114.1">
    <property type="nucleotide sequence ID" value="NC_000909.1"/>
</dbReference>
<dbReference type="STRING" id="243232.MJ_1589"/>
<dbReference type="PaxDb" id="243232-MJ_1589"/>
<dbReference type="EnsemblBacteria" id="AAB99617">
    <property type="protein sequence ID" value="AAB99617"/>
    <property type="gene ID" value="MJ_1589"/>
</dbReference>
<dbReference type="GeneID" id="1452498"/>
<dbReference type="KEGG" id="mja:MJ_1589"/>
<dbReference type="eggNOG" id="arCOG00360">
    <property type="taxonomic scope" value="Archaea"/>
</dbReference>
<dbReference type="HOGENOM" id="CLU_100473_0_0_2"/>
<dbReference type="InParanoid" id="Q58984"/>
<dbReference type="PhylomeDB" id="Q58984"/>
<dbReference type="Proteomes" id="UP000000805">
    <property type="component" value="Chromosome"/>
</dbReference>
<dbReference type="GO" id="GO:0005886">
    <property type="term" value="C:plasma membrane"/>
    <property type="evidence" value="ECO:0007669"/>
    <property type="project" value="UniProtKB-SubCell"/>
</dbReference>
<dbReference type="InterPro" id="IPR038880">
    <property type="entry name" value="MJ0871-like"/>
</dbReference>
<dbReference type="PANTHER" id="PTHR38139">
    <property type="entry name" value="GATE DOMAIN-CONTAINING PROTEIN"/>
    <property type="match status" value="1"/>
</dbReference>
<dbReference type="PANTHER" id="PTHR38139:SF1">
    <property type="entry name" value="NUCLEOSIDE TRANSPORTER_FEOB GTPASE GATE DOMAIN-CONTAINING PROTEIN"/>
    <property type="match status" value="1"/>
</dbReference>
<accession>Q58984</accession>
<organism>
    <name type="scientific">Methanocaldococcus jannaschii (strain ATCC 43067 / DSM 2661 / JAL-1 / JCM 10045 / NBRC 100440)</name>
    <name type="common">Methanococcus jannaschii</name>
    <dbReference type="NCBI Taxonomy" id="243232"/>
    <lineage>
        <taxon>Archaea</taxon>
        <taxon>Methanobacteriati</taxon>
        <taxon>Methanobacteriota</taxon>
        <taxon>Methanomada group</taxon>
        <taxon>Methanococci</taxon>
        <taxon>Methanococcales</taxon>
        <taxon>Methanocaldococcaceae</taxon>
        <taxon>Methanocaldococcus</taxon>
    </lineage>
</organism>
<gene>
    <name type="ordered locus">MJ1589</name>
</gene>
<reference key="1">
    <citation type="journal article" date="1996" name="Science">
        <title>Complete genome sequence of the methanogenic archaeon, Methanococcus jannaschii.</title>
        <authorList>
            <person name="Bult C.J."/>
            <person name="White O."/>
            <person name="Olsen G.J."/>
            <person name="Zhou L."/>
            <person name="Fleischmann R.D."/>
            <person name="Sutton G.G."/>
            <person name="Blake J.A."/>
            <person name="FitzGerald L.M."/>
            <person name="Clayton R.A."/>
            <person name="Gocayne J.D."/>
            <person name="Kerlavage A.R."/>
            <person name="Dougherty B.A."/>
            <person name="Tomb J.-F."/>
            <person name="Adams M.D."/>
            <person name="Reich C.I."/>
            <person name="Overbeek R."/>
            <person name="Kirkness E.F."/>
            <person name="Weinstock K.G."/>
            <person name="Merrick J.M."/>
            <person name="Glodek A."/>
            <person name="Scott J.L."/>
            <person name="Geoghagen N.S.M."/>
            <person name="Weidman J.F."/>
            <person name="Fuhrmann J.L."/>
            <person name="Nguyen D."/>
            <person name="Utterback T.R."/>
            <person name="Kelley J.M."/>
            <person name="Peterson J.D."/>
            <person name="Sadow P.W."/>
            <person name="Hanna M.C."/>
            <person name="Cotton M.D."/>
            <person name="Roberts K.M."/>
            <person name="Hurst M.A."/>
            <person name="Kaine B.P."/>
            <person name="Borodovsky M."/>
            <person name="Klenk H.-P."/>
            <person name="Fraser C.M."/>
            <person name="Smith H.O."/>
            <person name="Woese C.R."/>
            <person name="Venter J.C."/>
        </authorList>
    </citation>
    <scope>NUCLEOTIDE SEQUENCE [LARGE SCALE GENOMIC DNA]</scope>
    <source>
        <strain>ATCC 43067 / DSM 2661 / JAL-1 / JCM 10045 / NBRC 100440</strain>
    </source>
</reference>
<evidence type="ECO:0000255" key="1"/>
<evidence type="ECO:0000305" key="2"/>
<proteinExistence type="predicted"/>
<comment type="subcellular location">
    <subcellularLocation>
        <location evidence="2">Cell membrane</location>
        <topology evidence="2">Multi-pass membrane protein</topology>
    </subcellularLocation>
</comment>
<comment type="similarity">
    <text evidence="2">To M.jannaschii MJ0871, MJ0880 and MJ1556.</text>
</comment>
<sequence>MMMALQIFIKILPIMFFGILLANLMCHLNILYKLQKYIKNKYFPIIAVFFVSSTSGSFLLKNLLKKGEISEENLLPIYFLGMFVFGIHIILFYAIPMATSLGWYVGGIYVLIKFLVTCNYLIISVLMLKKRKYNIDIEFKSKSEGLYGAIRDTFKQYFRVLTSFVPSVLIITYLIEHGLLDIVEDFAGSLLNALNLSPTILVIVLTGLATISGAIGIASGLLDENILSPNEVLFSLFLAGF</sequence>